<comment type="function">
    <text evidence="2">GTP hydrolase that promotes the GTP-dependent binding of aminoacyl-tRNA to the A-site of ribosomes during protein biosynthesis.</text>
</comment>
<comment type="catalytic activity">
    <reaction evidence="2">
        <text>GTP + H2O = GDP + phosphate + H(+)</text>
        <dbReference type="Rhea" id="RHEA:19669"/>
        <dbReference type="ChEBI" id="CHEBI:15377"/>
        <dbReference type="ChEBI" id="CHEBI:15378"/>
        <dbReference type="ChEBI" id="CHEBI:37565"/>
        <dbReference type="ChEBI" id="CHEBI:43474"/>
        <dbReference type="ChEBI" id="CHEBI:58189"/>
        <dbReference type="EC" id="3.6.5.3"/>
    </reaction>
    <physiologicalReaction direction="left-to-right" evidence="2">
        <dbReference type="Rhea" id="RHEA:19670"/>
    </physiologicalReaction>
</comment>
<comment type="subunit">
    <text evidence="2">Monomer.</text>
</comment>
<comment type="subcellular location">
    <subcellularLocation>
        <location evidence="2">Cytoplasm</location>
    </subcellularLocation>
</comment>
<comment type="similarity">
    <text evidence="2">Belongs to the TRAFAC class translation factor GTPase superfamily. Classic translation factor GTPase family. EF-Tu/EF-1A subfamily.</text>
</comment>
<reference key="1">
    <citation type="journal article" date="2008" name="J. Bacteriol.">
        <title>Complete genome sequence of the mosquitocidal bacterium Bacillus sphaericus C3-41 and comparison with those of closely related Bacillus species.</title>
        <authorList>
            <person name="Hu X."/>
            <person name="Fan W."/>
            <person name="Han B."/>
            <person name="Liu H."/>
            <person name="Zheng D."/>
            <person name="Li Q."/>
            <person name="Dong W."/>
            <person name="Yan J."/>
            <person name="Gao M."/>
            <person name="Berry C."/>
            <person name="Yuan Z."/>
        </authorList>
    </citation>
    <scope>NUCLEOTIDE SEQUENCE [LARGE SCALE GENOMIC DNA]</scope>
    <source>
        <strain>C3-41</strain>
    </source>
</reference>
<gene>
    <name evidence="2" type="primary">tuf</name>
    <name type="ordered locus">Bsph_4624</name>
</gene>
<organism>
    <name type="scientific">Lysinibacillus sphaericus (strain C3-41)</name>
    <dbReference type="NCBI Taxonomy" id="444177"/>
    <lineage>
        <taxon>Bacteria</taxon>
        <taxon>Bacillati</taxon>
        <taxon>Bacillota</taxon>
        <taxon>Bacilli</taxon>
        <taxon>Bacillales</taxon>
        <taxon>Bacillaceae</taxon>
        <taxon>Lysinibacillus</taxon>
    </lineage>
</organism>
<accession>B1HMZ0</accession>
<name>EFTU_LYSSC</name>
<sequence>MAKEKFDRSKTHANIGTIGHVDHGKTTLTAAIATVLSKKMGGTAKSYADIDNAPEEKERGITINTSHVEYETETRHYAHVDCPGHADYVKNMITGAAQMDGGILVVSAADGPMPQTREHILLSRQVGVPYLVVFMNKCDMVDDEELLELVEMEIRDLLSEYDFPGDDIPVIKGSALKALEGEPEWEEKIVELMDAVDSYIPTPERQTDKPFMMPVEDVFSITGRGTVATGRVERGQVKVGDVVEIIGIAEEAKSTTVTGVEMFRKLLDYAEAGDNIGALLRGVAREEIQRGQVLAKPGSITPHTNFKAEVYVLSKEEGGRHTPFFSNYRPQFYFRTTDVTGICNLPEGVEMVMPGDNIEMTVELIAPIALEEGTKFSIREGGRTVGAGVVASIQK</sequence>
<proteinExistence type="inferred from homology"/>
<keyword id="KW-0963">Cytoplasm</keyword>
<keyword id="KW-0251">Elongation factor</keyword>
<keyword id="KW-0342">GTP-binding</keyword>
<keyword id="KW-0378">Hydrolase</keyword>
<keyword id="KW-0460">Magnesium</keyword>
<keyword id="KW-0479">Metal-binding</keyword>
<keyword id="KW-0547">Nucleotide-binding</keyword>
<keyword id="KW-0648">Protein biosynthesis</keyword>
<feature type="chain" id="PRO_1000095075" description="Elongation factor Tu">
    <location>
        <begin position="1"/>
        <end position="395"/>
    </location>
</feature>
<feature type="domain" description="tr-type G">
    <location>
        <begin position="10"/>
        <end position="204"/>
    </location>
</feature>
<feature type="region of interest" description="G1" evidence="1">
    <location>
        <begin position="19"/>
        <end position="26"/>
    </location>
</feature>
<feature type="region of interest" description="G2" evidence="1">
    <location>
        <begin position="60"/>
        <end position="64"/>
    </location>
</feature>
<feature type="region of interest" description="G3" evidence="1">
    <location>
        <begin position="81"/>
        <end position="84"/>
    </location>
</feature>
<feature type="region of interest" description="G4" evidence="1">
    <location>
        <begin position="136"/>
        <end position="139"/>
    </location>
</feature>
<feature type="region of interest" description="G5" evidence="1">
    <location>
        <begin position="174"/>
        <end position="176"/>
    </location>
</feature>
<feature type="binding site" evidence="2">
    <location>
        <begin position="19"/>
        <end position="26"/>
    </location>
    <ligand>
        <name>GTP</name>
        <dbReference type="ChEBI" id="CHEBI:37565"/>
    </ligand>
</feature>
<feature type="binding site" evidence="2">
    <location>
        <position position="26"/>
    </location>
    <ligand>
        <name>Mg(2+)</name>
        <dbReference type="ChEBI" id="CHEBI:18420"/>
    </ligand>
</feature>
<feature type="binding site" evidence="2">
    <location>
        <begin position="81"/>
        <end position="85"/>
    </location>
    <ligand>
        <name>GTP</name>
        <dbReference type="ChEBI" id="CHEBI:37565"/>
    </ligand>
</feature>
<feature type="binding site" evidence="2">
    <location>
        <begin position="136"/>
        <end position="139"/>
    </location>
    <ligand>
        <name>GTP</name>
        <dbReference type="ChEBI" id="CHEBI:37565"/>
    </ligand>
</feature>
<dbReference type="EC" id="3.6.5.3" evidence="2"/>
<dbReference type="EMBL" id="CP000817">
    <property type="protein sequence ID" value="ACA42068.1"/>
    <property type="molecule type" value="Genomic_DNA"/>
</dbReference>
<dbReference type="RefSeq" id="WP_004233614.1">
    <property type="nucleotide sequence ID" value="NC_010382.1"/>
</dbReference>
<dbReference type="SMR" id="B1HMZ0"/>
<dbReference type="EnsemblBacteria" id="ACA42068">
    <property type="protein sequence ID" value="ACA42068"/>
    <property type="gene ID" value="Bsph_4624"/>
</dbReference>
<dbReference type="GeneID" id="74907572"/>
<dbReference type="KEGG" id="lsp:Bsph_4624"/>
<dbReference type="HOGENOM" id="CLU_007265_0_0_9"/>
<dbReference type="Proteomes" id="UP000002164">
    <property type="component" value="Chromosome"/>
</dbReference>
<dbReference type="GO" id="GO:0005829">
    <property type="term" value="C:cytosol"/>
    <property type="evidence" value="ECO:0007669"/>
    <property type="project" value="TreeGrafter"/>
</dbReference>
<dbReference type="GO" id="GO:0005525">
    <property type="term" value="F:GTP binding"/>
    <property type="evidence" value="ECO:0007669"/>
    <property type="project" value="UniProtKB-UniRule"/>
</dbReference>
<dbReference type="GO" id="GO:0003924">
    <property type="term" value="F:GTPase activity"/>
    <property type="evidence" value="ECO:0007669"/>
    <property type="project" value="InterPro"/>
</dbReference>
<dbReference type="GO" id="GO:0003746">
    <property type="term" value="F:translation elongation factor activity"/>
    <property type="evidence" value="ECO:0007669"/>
    <property type="project" value="UniProtKB-UniRule"/>
</dbReference>
<dbReference type="CDD" id="cd01884">
    <property type="entry name" value="EF_Tu"/>
    <property type="match status" value="1"/>
</dbReference>
<dbReference type="CDD" id="cd03697">
    <property type="entry name" value="EFTU_II"/>
    <property type="match status" value="1"/>
</dbReference>
<dbReference type="CDD" id="cd03707">
    <property type="entry name" value="EFTU_III"/>
    <property type="match status" value="1"/>
</dbReference>
<dbReference type="FunFam" id="2.40.30.10:FF:000001">
    <property type="entry name" value="Elongation factor Tu"/>
    <property type="match status" value="1"/>
</dbReference>
<dbReference type="FunFam" id="3.40.50.300:FF:000003">
    <property type="entry name" value="Elongation factor Tu"/>
    <property type="match status" value="1"/>
</dbReference>
<dbReference type="Gene3D" id="3.40.50.300">
    <property type="entry name" value="P-loop containing nucleotide triphosphate hydrolases"/>
    <property type="match status" value="1"/>
</dbReference>
<dbReference type="Gene3D" id="2.40.30.10">
    <property type="entry name" value="Translation factors"/>
    <property type="match status" value="2"/>
</dbReference>
<dbReference type="HAMAP" id="MF_00118_B">
    <property type="entry name" value="EF_Tu_B"/>
    <property type="match status" value="1"/>
</dbReference>
<dbReference type="InterPro" id="IPR041709">
    <property type="entry name" value="EF-Tu_GTP-bd"/>
</dbReference>
<dbReference type="InterPro" id="IPR050055">
    <property type="entry name" value="EF-Tu_GTPase"/>
</dbReference>
<dbReference type="InterPro" id="IPR004161">
    <property type="entry name" value="EFTu-like_2"/>
</dbReference>
<dbReference type="InterPro" id="IPR033720">
    <property type="entry name" value="EFTU_2"/>
</dbReference>
<dbReference type="InterPro" id="IPR031157">
    <property type="entry name" value="G_TR_CS"/>
</dbReference>
<dbReference type="InterPro" id="IPR027417">
    <property type="entry name" value="P-loop_NTPase"/>
</dbReference>
<dbReference type="InterPro" id="IPR005225">
    <property type="entry name" value="Small_GTP-bd"/>
</dbReference>
<dbReference type="InterPro" id="IPR000795">
    <property type="entry name" value="T_Tr_GTP-bd_dom"/>
</dbReference>
<dbReference type="InterPro" id="IPR009000">
    <property type="entry name" value="Transl_B-barrel_sf"/>
</dbReference>
<dbReference type="InterPro" id="IPR009001">
    <property type="entry name" value="Transl_elong_EF1A/Init_IF2_C"/>
</dbReference>
<dbReference type="InterPro" id="IPR004541">
    <property type="entry name" value="Transl_elong_EFTu/EF1A_bac/org"/>
</dbReference>
<dbReference type="InterPro" id="IPR004160">
    <property type="entry name" value="Transl_elong_EFTu/EF1A_C"/>
</dbReference>
<dbReference type="NCBIfam" id="TIGR00485">
    <property type="entry name" value="EF-Tu"/>
    <property type="match status" value="1"/>
</dbReference>
<dbReference type="NCBIfam" id="NF000766">
    <property type="entry name" value="PRK00049.1"/>
    <property type="match status" value="1"/>
</dbReference>
<dbReference type="NCBIfam" id="NF009372">
    <property type="entry name" value="PRK12735.1"/>
    <property type="match status" value="1"/>
</dbReference>
<dbReference type="NCBIfam" id="NF009373">
    <property type="entry name" value="PRK12736.1"/>
    <property type="match status" value="1"/>
</dbReference>
<dbReference type="NCBIfam" id="TIGR00231">
    <property type="entry name" value="small_GTP"/>
    <property type="match status" value="1"/>
</dbReference>
<dbReference type="PANTHER" id="PTHR43721:SF22">
    <property type="entry name" value="ELONGATION FACTOR TU, MITOCHONDRIAL"/>
    <property type="match status" value="1"/>
</dbReference>
<dbReference type="PANTHER" id="PTHR43721">
    <property type="entry name" value="ELONGATION FACTOR TU-RELATED"/>
    <property type="match status" value="1"/>
</dbReference>
<dbReference type="Pfam" id="PF00009">
    <property type="entry name" value="GTP_EFTU"/>
    <property type="match status" value="1"/>
</dbReference>
<dbReference type="Pfam" id="PF03144">
    <property type="entry name" value="GTP_EFTU_D2"/>
    <property type="match status" value="1"/>
</dbReference>
<dbReference type="Pfam" id="PF03143">
    <property type="entry name" value="GTP_EFTU_D3"/>
    <property type="match status" value="1"/>
</dbReference>
<dbReference type="PRINTS" id="PR00315">
    <property type="entry name" value="ELONGATNFCT"/>
</dbReference>
<dbReference type="SUPFAM" id="SSF50465">
    <property type="entry name" value="EF-Tu/eEF-1alpha/eIF2-gamma C-terminal domain"/>
    <property type="match status" value="1"/>
</dbReference>
<dbReference type="SUPFAM" id="SSF52540">
    <property type="entry name" value="P-loop containing nucleoside triphosphate hydrolases"/>
    <property type="match status" value="1"/>
</dbReference>
<dbReference type="SUPFAM" id="SSF50447">
    <property type="entry name" value="Translation proteins"/>
    <property type="match status" value="1"/>
</dbReference>
<dbReference type="PROSITE" id="PS00301">
    <property type="entry name" value="G_TR_1"/>
    <property type="match status" value="1"/>
</dbReference>
<dbReference type="PROSITE" id="PS51722">
    <property type="entry name" value="G_TR_2"/>
    <property type="match status" value="1"/>
</dbReference>
<protein>
    <recommendedName>
        <fullName evidence="2">Elongation factor Tu</fullName>
        <shortName evidence="2">EF-Tu</shortName>
        <ecNumber evidence="2">3.6.5.3</ecNumber>
    </recommendedName>
</protein>
<evidence type="ECO:0000250" key="1"/>
<evidence type="ECO:0000255" key="2">
    <source>
        <dbReference type="HAMAP-Rule" id="MF_00118"/>
    </source>
</evidence>